<protein>
    <recommendedName>
        <fullName>Nucleolar protein 16</fullName>
    </recommendedName>
    <alternativeName>
        <fullName>HBV pre-S2 trans-regulated protein 3</fullName>
    </alternativeName>
</protein>
<evidence type="ECO:0000256" key="1">
    <source>
        <dbReference type="SAM" id="MobiDB-lite"/>
    </source>
</evidence>
<evidence type="ECO:0000269" key="2">
    <source>
    </source>
</evidence>
<evidence type="ECO:0000303" key="3">
    <source>
    </source>
</evidence>
<evidence type="ECO:0000303" key="4">
    <source>
    </source>
</evidence>
<evidence type="ECO:0000305" key="5"/>
<evidence type="ECO:0007744" key="6">
    <source>
    </source>
</evidence>
<evidence type="ECO:0007744" key="7">
    <source>
    </source>
</evidence>
<evidence type="ECO:0007744" key="8">
    <source>
    </source>
</evidence>
<evidence type="ECO:0007744" key="9">
    <source>
    </source>
</evidence>
<evidence type="ECO:0007744" key="10">
    <source>
    </source>
</evidence>
<sequence length="178" mass="21188">MPKAKGKTRRQKFGYSVNRKRLNRNARRKAAPRIECSHIRHAWDHAKSVRQNLAEMGLAVDPNRAVPLRKRKVKAMEVDIEERPKELVRKPYVLNDLEAEASLPEKKGNTLSRDLIDYVRYMVENHGEDYKAMARDEKNYYQDTPKQIRSKINVYKRFYPAEWQDFLDSLQKRKMEVE</sequence>
<dbReference type="EMBL" id="AY561704">
    <property type="protein sequence ID" value="AAS66977.1"/>
    <property type="molecule type" value="mRNA"/>
</dbReference>
<dbReference type="EMBL" id="AF151875">
    <property type="protein sequence ID" value="AAD34112.1"/>
    <property type="molecule type" value="mRNA"/>
</dbReference>
<dbReference type="EMBL" id="AF161460">
    <property type="protein sequence ID" value="AAF29075.1"/>
    <property type="molecule type" value="mRNA"/>
</dbReference>
<dbReference type="EMBL" id="AK300883">
    <property type="protein sequence ID" value="BAG62525.1"/>
    <property type="status" value="ALT_FRAME"/>
    <property type="molecule type" value="mRNA"/>
</dbReference>
<dbReference type="EMBL" id="CR457169">
    <property type="protein sequence ID" value="CAG33450.1"/>
    <property type="molecule type" value="mRNA"/>
</dbReference>
<dbReference type="EMBL" id="AC138956">
    <property type="status" value="NOT_ANNOTATED_CDS"/>
    <property type="molecule type" value="Genomic_DNA"/>
</dbReference>
<dbReference type="EMBL" id="KF459629">
    <property type="status" value="NOT_ANNOTATED_CDS"/>
    <property type="molecule type" value="Genomic_DNA"/>
</dbReference>
<dbReference type="EMBL" id="CH471195">
    <property type="protein sequence ID" value="EAW85084.1"/>
    <property type="molecule type" value="Genomic_DNA"/>
</dbReference>
<dbReference type="EMBL" id="CH471195">
    <property type="protein sequence ID" value="EAW85085.1"/>
    <property type="status" value="ALT_FRAME"/>
    <property type="molecule type" value="Genomic_DNA"/>
</dbReference>
<dbReference type="EMBL" id="BC019331">
    <property type="protein sequence ID" value="AAH19331.1"/>
    <property type="status" value="ALT_FRAME"/>
    <property type="molecule type" value="mRNA"/>
</dbReference>
<dbReference type="EMBL" id="BC032424">
    <property type="protein sequence ID" value="AAH32424.1"/>
    <property type="molecule type" value="mRNA"/>
</dbReference>
<dbReference type="EMBL" id="BC040106">
    <property type="protein sequence ID" value="AAH40106.1"/>
    <property type="molecule type" value="mRNA"/>
</dbReference>
<dbReference type="CCDS" id="CCDS43403.1">
    <molecule id="Q9Y3C1-1"/>
</dbReference>
<dbReference type="CCDS" id="CCDS78091.1">
    <molecule id="Q9Y3C1-3"/>
</dbReference>
<dbReference type="RefSeq" id="NP_001243468.2">
    <molecule id="Q9Y3C1-3"/>
    <property type="nucleotide sequence ID" value="NM_001256539.4"/>
</dbReference>
<dbReference type="RefSeq" id="NP_001243469.2">
    <property type="nucleotide sequence ID" value="NM_001256540.3"/>
</dbReference>
<dbReference type="RefSeq" id="NP_001278234.1">
    <property type="nucleotide sequence ID" value="NM_001291305.2"/>
</dbReference>
<dbReference type="RefSeq" id="NP_001278236.1">
    <property type="nucleotide sequence ID" value="NM_001291307.2"/>
</dbReference>
<dbReference type="RefSeq" id="NP_001278237.1">
    <property type="nucleotide sequence ID" value="NM_001291308.2"/>
</dbReference>
<dbReference type="RefSeq" id="NP_001304904.1">
    <property type="nucleotide sequence ID" value="NM_001317975.1"/>
</dbReference>
<dbReference type="RefSeq" id="NP_057475.2">
    <molecule id="Q9Y3C1-1"/>
    <property type="nucleotide sequence ID" value="NM_016391.8"/>
</dbReference>
<dbReference type="PDB" id="8FKP">
    <property type="method" value="EM"/>
    <property type="resolution" value="2.85 A"/>
    <property type="chains" value="SZ=1-178"/>
</dbReference>
<dbReference type="PDB" id="8FKQ">
    <property type="method" value="EM"/>
    <property type="resolution" value="2.76 A"/>
    <property type="chains" value="SZ=1-178"/>
</dbReference>
<dbReference type="PDB" id="8FKR">
    <property type="method" value="EM"/>
    <property type="resolution" value="2.89 A"/>
    <property type="chains" value="SZ=1-178"/>
</dbReference>
<dbReference type="PDB" id="8FKS">
    <property type="method" value="EM"/>
    <property type="resolution" value="2.88 A"/>
    <property type="chains" value="SZ=1-178"/>
</dbReference>
<dbReference type="PDB" id="8FKT">
    <property type="method" value="EM"/>
    <property type="resolution" value="2.81 A"/>
    <property type="chains" value="SZ=1-178"/>
</dbReference>
<dbReference type="PDB" id="8FKU">
    <property type="method" value="EM"/>
    <property type="resolution" value="2.82 A"/>
    <property type="chains" value="SZ=1-178"/>
</dbReference>
<dbReference type="PDB" id="8FKV">
    <property type="method" value="EM"/>
    <property type="resolution" value="2.47 A"/>
    <property type="chains" value="SZ=1-178"/>
</dbReference>
<dbReference type="PDB" id="8FKW">
    <property type="method" value="EM"/>
    <property type="resolution" value="2.50 A"/>
    <property type="chains" value="SZ=1-178"/>
</dbReference>
<dbReference type="PDB" id="8FKX">
    <property type="method" value="EM"/>
    <property type="resolution" value="2.59 A"/>
    <property type="chains" value="SZ=1-178"/>
</dbReference>
<dbReference type="PDB" id="8FKY">
    <property type="method" value="EM"/>
    <property type="resolution" value="2.67 A"/>
    <property type="chains" value="SZ=1-178"/>
</dbReference>
<dbReference type="PDBsum" id="8FKP"/>
<dbReference type="PDBsum" id="8FKQ"/>
<dbReference type="PDBsum" id="8FKR"/>
<dbReference type="PDBsum" id="8FKS"/>
<dbReference type="PDBsum" id="8FKT"/>
<dbReference type="PDBsum" id="8FKU"/>
<dbReference type="PDBsum" id="8FKV"/>
<dbReference type="PDBsum" id="8FKW"/>
<dbReference type="PDBsum" id="8FKX"/>
<dbReference type="PDBsum" id="8FKY"/>
<dbReference type="EMDB" id="EMD-29252"/>
<dbReference type="EMDB" id="EMD-29253"/>
<dbReference type="EMDB" id="EMD-29254"/>
<dbReference type="EMDB" id="EMD-29255"/>
<dbReference type="EMDB" id="EMD-29256"/>
<dbReference type="EMDB" id="EMD-29257"/>
<dbReference type="EMDB" id="EMD-29258"/>
<dbReference type="EMDB" id="EMD-29259"/>
<dbReference type="EMDB" id="EMD-29260"/>
<dbReference type="EMDB" id="EMD-29261"/>
<dbReference type="SMR" id="Q9Y3C1"/>
<dbReference type="BioGRID" id="119568">
    <property type="interactions" value="216"/>
</dbReference>
<dbReference type="FunCoup" id="Q9Y3C1">
    <property type="interactions" value="2898"/>
</dbReference>
<dbReference type="IntAct" id="Q9Y3C1">
    <property type="interactions" value="130"/>
</dbReference>
<dbReference type="MINT" id="Q9Y3C1"/>
<dbReference type="STRING" id="9606.ENSP00000483001"/>
<dbReference type="GlyGen" id="Q9Y3C1">
    <property type="glycosylation" value="1 site, 1 O-linked glycan (1 site)"/>
</dbReference>
<dbReference type="iPTMnet" id="Q9Y3C1"/>
<dbReference type="MetOSite" id="Q9Y3C1"/>
<dbReference type="PhosphoSitePlus" id="Q9Y3C1"/>
<dbReference type="SwissPalm" id="Q9Y3C1"/>
<dbReference type="BioMuta" id="NOP16"/>
<dbReference type="DMDM" id="115311631"/>
<dbReference type="jPOST" id="Q9Y3C1"/>
<dbReference type="MassIVE" id="Q9Y3C1"/>
<dbReference type="PaxDb" id="9606-ENSP00000480832"/>
<dbReference type="PeptideAtlas" id="Q9Y3C1"/>
<dbReference type="ProteomicsDB" id="14665"/>
<dbReference type="ProteomicsDB" id="86010">
    <molecule id="Q9Y3C1-1"/>
</dbReference>
<dbReference type="Pumba" id="Q9Y3C1"/>
<dbReference type="TopDownProteomics" id="Q9Y3C1-1">
    <molecule id="Q9Y3C1-1"/>
</dbReference>
<dbReference type="Antibodypedia" id="29078">
    <property type="antibodies" value="162 antibodies from 22 providers"/>
</dbReference>
<dbReference type="DNASU" id="51491"/>
<dbReference type="Ensembl" id="ENST00000614830.5">
    <molecule id="Q9Y3C1-1"/>
    <property type="protein sequence ID" value="ENSP00000480832.2"/>
    <property type="gene ID" value="ENSG00000048162.22"/>
</dbReference>
<dbReference type="Ensembl" id="ENST00000618911.4">
    <molecule id="Q9Y3C1-3"/>
    <property type="protein sequence ID" value="ENSP00000483001.1"/>
    <property type="gene ID" value="ENSG00000048162.22"/>
</dbReference>
<dbReference type="GeneID" id="51491"/>
<dbReference type="KEGG" id="hsa:51491"/>
<dbReference type="MANE-Select" id="ENST00000614830.5">
    <property type="protein sequence ID" value="ENSP00000480832.2"/>
    <property type="RefSeq nucleotide sequence ID" value="NM_016391.8"/>
    <property type="RefSeq protein sequence ID" value="NP_057475.2"/>
</dbReference>
<dbReference type="UCSC" id="uc032vuv.2">
    <molecule id="Q9Y3C1-1"/>
    <property type="organism name" value="human"/>
</dbReference>
<dbReference type="UCSC" id="uc063jyi.1">
    <property type="organism name" value="human"/>
</dbReference>
<dbReference type="AGR" id="HGNC:26934"/>
<dbReference type="CTD" id="51491"/>
<dbReference type="DisGeNET" id="51491"/>
<dbReference type="GeneCards" id="NOP16"/>
<dbReference type="HGNC" id="HGNC:26934">
    <property type="gene designation" value="NOP16"/>
</dbReference>
<dbReference type="HPA" id="ENSG00000048162">
    <property type="expression patterns" value="Low tissue specificity"/>
</dbReference>
<dbReference type="MIM" id="612861">
    <property type="type" value="gene"/>
</dbReference>
<dbReference type="neXtProt" id="NX_Q9Y3C1"/>
<dbReference type="OpenTargets" id="ENSG00000048162"/>
<dbReference type="PharmGKB" id="PA164724025"/>
<dbReference type="VEuPathDB" id="HostDB:ENSG00000048162"/>
<dbReference type="eggNOG" id="KOG4706">
    <property type="taxonomic scope" value="Eukaryota"/>
</dbReference>
<dbReference type="GeneTree" id="ENSGT00390000003426"/>
<dbReference type="HOGENOM" id="CLU_115103_0_0_1"/>
<dbReference type="InParanoid" id="Q9Y3C1"/>
<dbReference type="OMA" id="IDYVKHM"/>
<dbReference type="OrthoDB" id="285729at2759"/>
<dbReference type="PAN-GO" id="Q9Y3C1">
    <property type="GO annotations" value="2 GO annotations based on evolutionary models"/>
</dbReference>
<dbReference type="PhylomeDB" id="Q9Y3C1"/>
<dbReference type="TreeFam" id="TF323541"/>
<dbReference type="PathwayCommons" id="Q9Y3C1"/>
<dbReference type="SignaLink" id="Q9Y3C1"/>
<dbReference type="BioGRID-ORCS" id="51491">
    <property type="hits" value="816 hits in 1175 CRISPR screens"/>
</dbReference>
<dbReference type="CD-CODE" id="91857CE7">
    <property type="entry name" value="Nucleolus"/>
</dbReference>
<dbReference type="ChiTaRS" id="NOP16">
    <property type="organism name" value="human"/>
</dbReference>
<dbReference type="GenomeRNAi" id="51491"/>
<dbReference type="Pharos" id="Q9Y3C1">
    <property type="development level" value="Tdark"/>
</dbReference>
<dbReference type="PRO" id="PR:Q9Y3C1"/>
<dbReference type="Proteomes" id="UP000005640">
    <property type="component" value="Chromosome 5"/>
</dbReference>
<dbReference type="RNAct" id="Q9Y3C1">
    <property type="molecule type" value="protein"/>
</dbReference>
<dbReference type="Bgee" id="ENSG00000048162">
    <property type="expression patterns" value="Expressed in gastrocnemius and 203 other cell types or tissues"/>
</dbReference>
<dbReference type="ExpressionAtlas" id="Q9Y3C1">
    <property type="expression patterns" value="baseline and differential"/>
</dbReference>
<dbReference type="GO" id="GO:0043231">
    <property type="term" value="C:intracellular membrane-bounded organelle"/>
    <property type="evidence" value="ECO:0000314"/>
    <property type="project" value="HPA"/>
</dbReference>
<dbReference type="GO" id="GO:0005730">
    <property type="term" value="C:nucleolus"/>
    <property type="evidence" value="ECO:0000314"/>
    <property type="project" value="HPA"/>
</dbReference>
<dbReference type="GO" id="GO:0005654">
    <property type="term" value="C:nucleoplasm"/>
    <property type="evidence" value="ECO:0000314"/>
    <property type="project" value="HPA"/>
</dbReference>
<dbReference type="GO" id="GO:0003723">
    <property type="term" value="F:RNA binding"/>
    <property type="evidence" value="ECO:0007005"/>
    <property type="project" value="UniProtKB"/>
</dbReference>
<dbReference type="GO" id="GO:0042273">
    <property type="term" value="P:ribosomal large subunit biogenesis"/>
    <property type="evidence" value="ECO:0000318"/>
    <property type="project" value="GO_Central"/>
</dbReference>
<dbReference type="InterPro" id="IPR019002">
    <property type="entry name" value="Ribosome_biogenesis_Nop16"/>
</dbReference>
<dbReference type="PANTHER" id="PTHR13243">
    <property type="entry name" value="HSPC111 PROTEIN-RELATED"/>
    <property type="match status" value="1"/>
</dbReference>
<dbReference type="PANTHER" id="PTHR13243:SF1">
    <property type="entry name" value="NUCLEOLAR PROTEIN 16"/>
    <property type="match status" value="1"/>
</dbReference>
<dbReference type="Pfam" id="PF09420">
    <property type="entry name" value="Nop16"/>
    <property type="match status" value="2"/>
</dbReference>
<comment type="subcellular location">
    <subcellularLocation>
        <location evidence="2">Nucleus</location>
        <location evidence="2">Nucleolus</location>
    </subcellularLocation>
</comment>
<comment type="alternative products">
    <event type="alternative splicing"/>
    <isoform>
        <id>Q9Y3C1-1</id>
        <name>1</name>
        <sequence type="displayed"/>
    </isoform>
    <isoform>
        <id>Q9Y3C1-2</id>
        <name>2</name>
        <sequence type="described" ref="VSP_045583"/>
    </isoform>
    <isoform>
        <id>Q9Y3C1-3</id>
        <name>3</name>
        <sequence type="described" ref="VSP_057393"/>
    </isoform>
</comment>
<comment type="similarity">
    <text evidence="5">Belongs to the NOP16 family.</text>
</comment>
<comment type="sequence caution" evidence="5">
    <conflict type="frameshift">
        <sequence resource="EMBL-CDS" id="AAH19331"/>
    </conflict>
</comment>
<comment type="sequence caution" evidence="5">
    <conflict type="frameshift">
        <sequence resource="EMBL-CDS" id="BAG62525"/>
    </conflict>
</comment>
<comment type="sequence caution" evidence="5">
    <conflict type="frameshift">
        <sequence resource="EMBL-CDS" id="EAW85085"/>
    </conflict>
</comment>
<proteinExistence type="evidence at protein level"/>
<reference key="1">
    <citation type="submission" date="2004-02" db="EMBL/GenBank/DDBJ databases">
        <title>Screening and identification of genes trans-regulated by hepatitis B virus pre-S2 protein by microarray assay.</title>
        <authorList>
            <person name="Ji D."/>
            <person name="Cheng J."/>
            <person name="Dong J."/>
            <person name="Liu Y."/>
            <person name="Wang J.-J."/>
            <person name="Guo J."/>
        </authorList>
    </citation>
    <scope>NUCLEOTIDE SEQUENCE [MRNA] (ISOFORM 1)</scope>
</reference>
<reference key="2">
    <citation type="journal article" date="2000" name="Genome Res.">
        <title>Identification of novel human genes evolutionarily conserved in Caenorhabditis elegans by comparative proteomics.</title>
        <authorList>
            <person name="Lai C.-H."/>
            <person name="Chou C.-Y."/>
            <person name="Ch'ang L.-Y."/>
            <person name="Liu C.-S."/>
            <person name="Lin W.-C."/>
        </authorList>
    </citation>
    <scope>NUCLEOTIDE SEQUENCE [LARGE SCALE MRNA] (ISOFORM 1)</scope>
</reference>
<reference key="3">
    <citation type="journal article" date="2000" name="Genome Res.">
        <title>Cloning and functional analysis of cDNAs with open reading frames for 300 previously undefined genes expressed in CD34+ hematopoietic stem/progenitor cells.</title>
        <authorList>
            <person name="Zhang Q.-H."/>
            <person name="Ye M."/>
            <person name="Wu X.-Y."/>
            <person name="Ren S.-X."/>
            <person name="Zhao M."/>
            <person name="Zhao C.-J."/>
            <person name="Fu G."/>
            <person name="Shen Y."/>
            <person name="Fan H.-Y."/>
            <person name="Lu G."/>
            <person name="Zhong M."/>
            <person name="Xu X.-R."/>
            <person name="Han Z.-G."/>
            <person name="Zhang J.-W."/>
            <person name="Tao J."/>
            <person name="Huang Q.-H."/>
            <person name="Zhou J."/>
            <person name="Hu G.-X."/>
            <person name="Gu J."/>
            <person name="Chen S.-J."/>
            <person name="Chen Z."/>
        </authorList>
    </citation>
    <scope>NUCLEOTIDE SEQUENCE [LARGE SCALE MRNA] (ISOFORM 1)</scope>
    <source>
        <tissue>Umbilical cord blood</tissue>
    </source>
</reference>
<reference key="4">
    <citation type="journal article" date="2004" name="Nat. Genet.">
        <title>Complete sequencing and characterization of 21,243 full-length human cDNAs.</title>
        <authorList>
            <person name="Ota T."/>
            <person name="Suzuki Y."/>
            <person name="Nishikawa T."/>
            <person name="Otsuki T."/>
            <person name="Sugiyama T."/>
            <person name="Irie R."/>
            <person name="Wakamatsu A."/>
            <person name="Hayashi K."/>
            <person name="Sato H."/>
            <person name="Nagai K."/>
            <person name="Kimura K."/>
            <person name="Makita H."/>
            <person name="Sekine M."/>
            <person name="Obayashi M."/>
            <person name="Nishi T."/>
            <person name="Shibahara T."/>
            <person name="Tanaka T."/>
            <person name="Ishii S."/>
            <person name="Yamamoto J."/>
            <person name="Saito K."/>
            <person name="Kawai Y."/>
            <person name="Isono Y."/>
            <person name="Nakamura Y."/>
            <person name="Nagahari K."/>
            <person name="Murakami K."/>
            <person name="Yasuda T."/>
            <person name="Iwayanagi T."/>
            <person name="Wagatsuma M."/>
            <person name="Shiratori A."/>
            <person name="Sudo H."/>
            <person name="Hosoiri T."/>
            <person name="Kaku Y."/>
            <person name="Kodaira H."/>
            <person name="Kondo H."/>
            <person name="Sugawara M."/>
            <person name="Takahashi M."/>
            <person name="Kanda K."/>
            <person name="Yokoi T."/>
            <person name="Furuya T."/>
            <person name="Kikkawa E."/>
            <person name="Omura Y."/>
            <person name="Abe K."/>
            <person name="Kamihara K."/>
            <person name="Katsuta N."/>
            <person name="Sato K."/>
            <person name="Tanikawa M."/>
            <person name="Yamazaki M."/>
            <person name="Ninomiya K."/>
            <person name="Ishibashi T."/>
            <person name="Yamashita H."/>
            <person name="Murakawa K."/>
            <person name="Fujimori K."/>
            <person name="Tanai H."/>
            <person name="Kimata M."/>
            <person name="Watanabe M."/>
            <person name="Hiraoka S."/>
            <person name="Chiba Y."/>
            <person name="Ishida S."/>
            <person name="Ono Y."/>
            <person name="Takiguchi S."/>
            <person name="Watanabe S."/>
            <person name="Yosida M."/>
            <person name="Hotuta T."/>
            <person name="Kusano J."/>
            <person name="Kanehori K."/>
            <person name="Takahashi-Fujii A."/>
            <person name="Hara H."/>
            <person name="Tanase T.-O."/>
            <person name="Nomura Y."/>
            <person name="Togiya S."/>
            <person name="Komai F."/>
            <person name="Hara R."/>
            <person name="Takeuchi K."/>
            <person name="Arita M."/>
            <person name="Imose N."/>
            <person name="Musashino K."/>
            <person name="Yuuki H."/>
            <person name="Oshima A."/>
            <person name="Sasaki N."/>
            <person name="Aotsuka S."/>
            <person name="Yoshikawa Y."/>
            <person name="Matsunawa H."/>
            <person name="Ichihara T."/>
            <person name="Shiohata N."/>
            <person name="Sano S."/>
            <person name="Moriya S."/>
            <person name="Momiyama H."/>
            <person name="Satoh N."/>
            <person name="Takami S."/>
            <person name="Terashima Y."/>
            <person name="Suzuki O."/>
            <person name="Nakagawa S."/>
            <person name="Senoh A."/>
            <person name="Mizoguchi H."/>
            <person name="Goto Y."/>
            <person name="Shimizu F."/>
            <person name="Wakebe H."/>
            <person name="Hishigaki H."/>
            <person name="Watanabe T."/>
            <person name="Sugiyama A."/>
            <person name="Takemoto M."/>
            <person name="Kawakami B."/>
            <person name="Yamazaki M."/>
            <person name="Watanabe K."/>
            <person name="Kumagai A."/>
            <person name="Itakura S."/>
            <person name="Fukuzumi Y."/>
            <person name="Fujimori Y."/>
            <person name="Komiyama M."/>
            <person name="Tashiro H."/>
            <person name="Tanigami A."/>
            <person name="Fujiwara T."/>
            <person name="Ono T."/>
            <person name="Yamada K."/>
            <person name="Fujii Y."/>
            <person name="Ozaki K."/>
            <person name="Hirao M."/>
            <person name="Ohmori Y."/>
            <person name="Kawabata A."/>
            <person name="Hikiji T."/>
            <person name="Kobatake N."/>
            <person name="Inagaki H."/>
            <person name="Ikema Y."/>
            <person name="Okamoto S."/>
            <person name="Okitani R."/>
            <person name="Kawakami T."/>
            <person name="Noguchi S."/>
            <person name="Itoh T."/>
            <person name="Shigeta K."/>
            <person name="Senba T."/>
            <person name="Matsumura K."/>
            <person name="Nakajima Y."/>
            <person name="Mizuno T."/>
            <person name="Morinaga M."/>
            <person name="Sasaki M."/>
            <person name="Togashi T."/>
            <person name="Oyama M."/>
            <person name="Hata H."/>
            <person name="Watanabe M."/>
            <person name="Komatsu T."/>
            <person name="Mizushima-Sugano J."/>
            <person name="Satoh T."/>
            <person name="Shirai Y."/>
            <person name="Takahashi Y."/>
            <person name="Nakagawa K."/>
            <person name="Okumura K."/>
            <person name="Nagase T."/>
            <person name="Nomura N."/>
            <person name="Kikuchi H."/>
            <person name="Masuho Y."/>
            <person name="Yamashita R."/>
            <person name="Nakai K."/>
            <person name="Yada T."/>
            <person name="Nakamura Y."/>
            <person name="Ohara O."/>
            <person name="Isogai T."/>
            <person name="Sugano S."/>
        </authorList>
    </citation>
    <scope>NUCLEOTIDE SEQUENCE [LARGE SCALE MRNA] (ISOFORM 2)</scope>
    <source>
        <tissue>Small intestine</tissue>
    </source>
</reference>
<reference key="5">
    <citation type="submission" date="2004-06" db="EMBL/GenBank/DDBJ databases">
        <title>Cloning of human full open reading frames in Gateway(TM) system entry vector (pDONR201).</title>
        <authorList>
            <person name="Ebert L."/>
            <person name="Schick M."/>
            <person name="Neubert P."/>
            <person name="Schatten R."/>
            <person name="Henze S."/>
            <person name="Korn B."/>
        </authorList>
    </citation>
    <scope>NUCLEOTIDE SEQUENCE [LARGE SCALE MRNA] (ISOFORM 1)</scope>
</reference>
<reference key="6">
    <citation type="journal article" date="2004" name="Nature">
        <title>The DNA sequence and comparative analysis of human chromosome 5.</title>
        <authorList>
            <person name="Schmutz J."/>
            <person name="Martin J."/>
            <person name="Terry A."/>
            <person name="Couronne O."/>
            <person name="Grimwood J."/>
            <person name="Lowry S."/>
            <person name="Gordon L.A."/>
            <person name="Scott D."/>
            <person name="Xie G."/>
            <person name="Huang W."/>
            <person name="Hellsten U."/>
            <person name="Tran-Gyamfi M."/>
            <person name="She X."/>
            <person name="Prabhakar S."/>
            <person name="Aerts A."/>
            <person name="Altherr M."/>
            <person name="Bajorek E."/>
            <person name="Black S."/>
            <person name="Branscomb E."/>
            <person name="Caoile C."/>
            <person name="Challacombe J.F."/>
            <person name="Chan Y.M."/>
            <person name="Denys M."/>
            <person name="Detter J.C."/>
            <person name="Escobar J."/>
            <person name="Flowers D."/>
            <person name="Fotopulos D."/>
            <person name="Glavina T."/>
            <person name="Gomez M."/>
            <person name="Gonzales E."/>
            <person name="Goodstein D."/>
            <person name="Grigoriev I."/>
            <person name="Groza M."/>
            <person name="Hammon N."/>
            <person name="Hawkins T."/>
            <person name="Haydu L."/>
            <person name="Israni S."/>
            <person name="Jett J."/>
            <person name="Kadner K."/>
            <person name="Kimball H."/>
            <person name="Kobayashi A."/>
            <person name="Lopez F."/>
            <person name="Lou Y."/>
            <person name="Martinez D."/>
            <person name="Medina C."/>
            <person name="Morgan J."/>
            <person name="Nandkeshwar R."/>
            <person name="Noonan J.P."/>
            <person name="Pitluck S."/>
            <person name="Pollard M."/>
            <person name="Predki P."/>
            <person name="Priest J."/>
            <person name="Ramirez L."/>
            <person name="Retterer J."/>
            <person name="Rodriguez A."/>
            <person name="Rogers S."/>
            <person name="Salamov A."/>
            <person name="Salazar A."/>
            <person name="Thayer N."/>
            <person name="Tice H."/>
            <person name="Tsai M."/>
            <person name="Ustaszewska A."/>
            <person name="Vo N."/>
            <person name="Wheeler J."/>
            <person name="Wu K."/>
            <person name="Yang J."/>
            <person name="Dickson M."/>
            <person name="Cheng J.-F."/>
            <person name="Eichler E.E."/>
            <person name="Olsen A."/>
            <person name="Pennacchio L.A."/>
            <person name="Rokhsar D.S."/>
            <person name="Richardson P."/>
            <person name="Lucas S.M."/>
            <person name="Myers R.M."/>
            <person name="Rubin E.M."/>
        </authorList>
    </citation>
    <scope>NUCLEOTIDE SEQUENCE [LARGE SCALE GENOMIC DNA]</scope>
</reference>
<reference key="7">
    <citation type="submission" date="2005-07" db="EMBL/GenBank/DDBJ databases">
        <authorList>
            <person name="Mural R.J."/>
            <person name="Istrail S."/>
            <person name="Sutton G."/>
            <person name="Florea L."/>
            <person name="Halpern A.L."/>
            <person name="Mobarry C.M."/>
            <person name="Lippert R."/>
            <person name="Walenz B."/>
            <person name="Shatkay H."/>
            <person name="Dew I."/>
            <person name="Miller J.R."/>
            <person name="Flanigan M.J."/>
            <person name="Edwards N.J."/>
            <person name="Bolanos R."/>
            <person name="Fasulo D."/>
            <person name="Halldorsson B.V."/>
            <person name="Hannenhalli S."/>
            <person name="Turner R."/>
            <person name="Yooseph S."/>
            <person name="Lu F."/>
            <person name="Nusskern D.R."/>
            <person name="Shue B.C."/>
            <person name="Zheng X.H."/>
            <person name="Zhong F."/>
            <person name="Delcher A.L."/>
            <person name="Huson D.H."/>
            <person name="Kravitz S.A."/>
            <person name="Mouchard L."/>
            <person name="Reinert K."/>
            <person name="Remington K.A."/>
            <person name="Clark A.G."/>
            <person name="Waterman M.S."/>
            <person name="Eichler E.E."/>
            <person name="Adams M.D."/>
            <person name="Hunkapiller M.W."/>
            <person name="Myers E.W."/>
            <person name="Venter J.C."/>
        </authorList>
    </citation>
    <scope>NUCLEOTIDE SEQUENCE [LARGE SCALE GENOMIC DNA]</scope>
</reference>
<reference key="8">
    <citation type="journal article" date="2004" name="Genome Res.">
        <title>The status, quality, and expansion of the NIH full-length cDNA project: the Mammalian Gene Collection (MGC).</title>
        <authorList>
            <consortium name="The MGC Project Team"/>
        </authorList>
    </citation>
    <scope>NUCLEOTIDE SEQUENCE [LARGE SCALE MRNA] (ISOFORMS 1; 2 AND 3)</scope>
    <source>
        <tissue>Lung</tissue>
        <tissue>Mammary gland</tissue>
        <tissue>Skin</tissue>
    </source>
</reference>
<reference key="9">
    <citation type="journal article" date="2002" name="Mol. Biol. Cell">
        <title>Functional proteomic analysis of human nucleolus.</title>
        <authorList>
            <person name="Scherl A."/>
            <person name="Coute Y."/>
            <person name="Deon C."/>
            <person name="Calle A."/>
            <person name="Kindbeiter K."/>
            <person name="Sanchez J.-C."/>
            <person name="Greco A."/>
            <person name="Hochstrasser D.F."/>
            <person name="Diaz J.-J."/>
        </authorList>
    </citation>
    <scope>SUBCELLULAR LOCATION [LARGE SCALE ANALYSIS]</scope>
    <source>
        <tissue>Cervix carcinoma</tissue>
    </source>
</reference>
<reference key="10">
    <citation type="journal article" date="2008" name="Proc. Natl. Acad. Sci. U.S.A.">
        <title>A quantitative atlas of mitotic phosphorylation.</title>
        <authorList>
            <person name="Dephoure N."/>
            <person name="Zhou C."/>
            <person name="Villen J."/>
            <person name="Beausoleil S.A."/>
            <person name="Bakalarski C.E."/>
            <person name="Elledge S.J."/>
            <person name="Gygi S.P."/>
        </authorList>
    </citation>
    <scope>PHOSPHORYLATION [LARGE SCALE ANALYSIS] AT SER-16 AND THR-144</scope>
    <scope>IDENTIFICATION BY MASS SPECTROMETRY [LARGE SCALE ANALYSIS]</scope>
    <source>
        <tissue>Cervix carcinoma</tissue>
    </source>
</reference>
<reference key="11">
    <citation type="journal article" date="2009" name="Science">
        <title>Lysine acetylation targets protein complexes and co-regulates major cellular functions.</title>
        <authorList>
            <person name="Choudhary C."/>
            <person name="Kumar C."/>
            <person name="Gnad F."/>
            <person name="Nielsen M.L."/>
            <person name="Rehman M."/>
            <person name="Walther T.C."/>
            <person name="Olsen J.V."/>
            <person name="Mann M."/>
        </authorList>
    </citation>
    <scope>ACETYLATION [LARGE SCALE ANALYSIS] AT LYS-90</scope>
    <scope>IDENTIFICATION BY MASS SPECTROMETRY [LARGE SCALE ANALYSIS]</scope>
</reference>
<reference key="12">
    <citation type="journal article" date="2011" name="BMC Syst. Biol.">
        <title>Initial characterization of the human central proteome.</title>
        <authorList>
            <person name="Burkard T.R."/>
            <person name="Planyavsky M."/>
            <person name="Kaupe I."/>
            <person name="Breitwieser F.P."/>
            <person name="Buerckstuemmer T."/>
            <person name="Bennett K.L."/>
            <person name="Superti-Furga G."/>
            <person name="Colinge J."/>
        </authorList>
    </citation>
    <scope>IDENTIFICATION BY MASS SPECTROMETRY [LARGE SCALE ANALYSIS]</scope>
</reference>
<reference key="13">
    <citation type="journal article" date="2011" name="Sci. Signal.">
        <title>System-wide temporal characterization of the proteome and phosphoproteome of human embryonic stem cell differentiation.</title>
        <authorList>
            <person name="Rigbolt K.T."/>
            <person name="Prokhorova T.A."/>
            <person name="Akimov V."/>
            <person name="Henningsen J."/>
            <person name="Johansen P.T."/>
            <person name="Kratchmarova I."/>
            <person name="Kassem M."/>
            <person name="Mann M."/>
            <person name="Olsen J.V."/>
            <person name="Blagoev B."/>
        </authorList>
    </citation>
    <scope>PHOSPHORYLATION [LARGE SCALE ANALYSIS] AT THR-8</scope>
    <scope>IDENTIFICATION BY MASS SPECTROMETRY [LARGE SCALE ANALYSIS]</scope>
</reference>
<reference key="14">
    <citation type="journal article" date="2012" name="Proc. Natl. Acad. Sci. U.S.A.">
        <title>N-terminal acetylome analyses and functional insights of the N-terminal acetyltransferase NatB.</title>
        <authorList>
            <person name="Van Damme P."/>
            <person name="Lasa M."/>
            <person name="Polevoda B."/>
            <person name="Gazquez C."/>
            <person name="Elosegui-Artola A."/>
            <person name="Kim D.S."/>
            <person name="De Juan-Pardo E."/>
            <person name="Demeyer K."/>
            <person name="Hole K."/>
            <person name="Larrea E."/>
            <person name="Timmerman E."/>
            <person name="Prieto J."/>
            <person name="Arnesen T."/>
            <person name="Sherman F."/>
            <person name="Gevaert K."/>
            <person name="Aldabe R."/>
        </authorList>
    </citation>
    <scope>IDENTIFICATION BY MASS SPECTROMETRY [LARGE SCALE ANALYSIS]</scope>
</reference>
<reference key="15">
    <citation type="journal article" date="2013" name="J. Proteome Res.">
        <title>Toward a comprehensive characterization of a human cancer cell phosphoproteome.</title>
        <authorList>
            <person name="Zhou H."/>
            <person name="Di Palma S."/>
            <person name="Preisinger C."/>
            <person name="Peng M."/>
            <person name="Polat A.N."/>
            <person name="Heck A.J."/>
            <person name="Mohammed S."/>
        </authorList>
    </citation>
    <scope>PHOSPHORYLATION [LARGE SCALE ANALYSIS] AT SER-16</scope>
    <scope>IDENTIFICATION BY MASS SPECTROMETRY [LARGE SCALE ANALYSIS]</scope>
    <source>
        <tissue>Cervix carcinoma</tissue>
        <tissue>Erythroleukemia</tissue>
    </source>
</reference>
<reference key="16">
    <citation type="journal article" date="2017" name="Nat. Struct. Mol. Biol.">
        <title>Site-specific mapping of the human SUMO proteome reveals co-modification with phosphorylation.</title>
        <authorList>
            <person name="Hendriks I.A."/>
            <person name="Lyon D."/>
            <person name="Young C."/>
            <person name="Jensen L.J."/>
            <person name="Vertegaal A.C."/>
            <person name="Nielsen M.L."/>
        </authorList>
    </citation>
    <scope>SUMOYLATION [LARGE SCALE ANALYSIS] AT LYS-74</scope>
    <scope>SUMOYLATION [LARGE SCALE ANALYSIS] AT LYS-166 AND LYS-172 (ISOFORM 2)</scope>
    <scope>SUMOYLATION [LARGE SCALE ANALYSIS] AT LYS-167 AND LYS-173 (ISOFORM 3)</scope>
    <scope>IDENTIFICATION BY MASS SPECTROMETRY [LARGE SCALE ANALYSIS]</scope>
</reference>
<gene>
    <name type="primary">NOP16</name>
    <name type="ORF">CGI-117</name>
    <name type="ORF">HSPC111</name>
</gene>
<organism>
    <name type="scientific">Homo sapiens</name>
    <name type="common">Human</name>
    <dbReference type="NCBI Taxonomy" id="9606"/>
    <lineage>
        <taxon>Eukaryota</taxon>
        <taxon>Metazoa</taxon>
        <taxon>Chordata</taxon>
        <taxon>Craniata</taxon>
        <taxon>Vertebrata</taxon>
        <taxon>Euteleostomi</taxon>
        <taxon>Mammalia</taxon>
        <taxon>Eutheria</taxon>
        <taxon>Euarchontoglires</taxon>
        <taxon>Primates</taxon>
        <taxon>Haplorrhini</taxon>
        <taxon>Catarrhini</taxon>
        <taxon>Hominidae</taxon>
        <taxon>Homo</taxon>
    </lineage>
</organism>
<name>NOP16_HUMAN</name>
<accession>Q9Y3C1</accession>
<accession>B4DV13</accession>
<accession>D6RGD3</accession>
<accession>Q05D05</accession>
<accession>Q6IAI6</accession>
<accession>Q6PIM0</accession>
<accession>Q8IXL5</accession>
<feature type="chain" id="PRO_0000050817" description="Nucleolar protein 16">
    <location>
        <begin position="1"/>
        <end position="178"/>
    </location>
</feature>
<feature type="region of interest" description="Disordered" evidence="1">
    <location>
        <begin position="1"/>
        <end position="31"/>
    </location>
</feature>
<feature type="modified residue" description="Phosphothreonine" evidence="8">
    <location>
        <position position="8"/>
    </location>
</feature>
<feature type="modified residue" description="Phosphoserine" evidence="6 9">
    <location>
        <position position="16"/>
    </location>
</feature>
<feature type="modified residue" description="N6-acetyllysine" evidence="7">
    <location>
        <position position="90"/>
    </location>
</feature>
<feature type="modified residue" description="Phosphothreonine" evidence="6">
    <location>
        <position position="144"/>
    </location>
</feature>
<feature type="cross-link" description="Glycyl lysine isopeptide (Lys-Gly) (interchain with G-Cter in SUMO2)" evidence="10">
    <location>
        <position position="74"/>
    </location>
</feature>
<feature type="splice variant" id="VSP_045583" description="In isoform 2." evidence="3 4">
    <original>AMARDEKNYYQDTPKQIRSKINVYKRFYPAEWQDFLDSLQKRKMEVE</original>
    <variation>SGKTSSILCRRGRWRWSDWFTSQLPQAEASPGPVKLEPGCKARRCCVAPEELARSHGIRRLHTRAHSPLWGRNCSQRLQFIFIWGFTEKPEPAVFRVGDVNIVCT</variation>
    <location>
        <begin position="132"/>
        <end position="178"/>
    </location>
</feature>
<feature type="splice variant" id="VSP_057393" description="In isoform 3." evidence="4">
    <original>AMARDEKNYYQDTPKQIRSKINVYKRFYPAEWQDFLDSLQKRKMEVE</original>
    <variation>QSGKTSSILCRRGRWRWSDWFTSQLPQAEASPGPVKLEPGCKARRCCVAPEELARSHGIRRLHTHVHTPRSGEGTVLRGSNLYSSGGSRKSQNLLFSGWVM</variation>
    <location>
        <begin position="132"/>
        <end position="178"/>
    </location>
</feature>
<feature type="sequence conflict" description="In Ref. 2; AAD34112 and 3; AAF29075." evidence="5" ref="2 3">
    <original>PR</original>
    <variation>RG</variation>
    <location>
        <begin position="32"/>
        <end position="33"/>
    </location>
</feature>
<feature type="sequence conflict" description="In Ref. 5; CAG33450." evidence="5" ref="5">
    <original>E</original>
    <variation>D</variation>
    <location>
        <position position="178"/>
    </location>
</feature>
<feature type="cross-link" description="Glycyl lysine isopeptide (Lys-Gly) (interchain with G-Cter in SUMO2)" evidence="10">
    <location sequence="Q9Y3C1-2">
        <position position="166"/>
    </location>
</feature>
<feature type="cross-link" description="Glycyl lysine isopeptide (Lys-Gly) (interchain with G-Cter in SUMO2)" evidence="10">
    <location sequence="Q9Y3C1-2">
        <position position="172"/>
    </location>
</feature>
<feature type="sequence conflict" description="In Ref. 4; BAG62525." evidence="5" ref="4">
    <original>C</original>
    <variation>F</variation>
    <location sequence="Q9Y3C1-2">
        <position position="171"/>
    </location>
</feature>
<feature type="cross-link" description="Glycyl lysine isopeptide (Lys-Gly) (interchain with G-Cter in SUMO2)" evidence="10">
    <location sequence="Q9Y3C1-3">
        <position position="167"/>
    </location>
</feature>
<feature type="cross-link" description="Glycyl lysine isopeptide (Lys-Gly) (interchain with G-Cter in SUMO2)" evidence="10">
    <location sequence="Q9Y3C1-3">
        <position position="173"/>
    </location>
</feature>
<keyword id="KW-0002">3D-structure</keyword>
<keyword id="KW-0007">Acetylation</keyword>
<keyword id="KW-0025">Alternative splicing</keyword>
<keyword id="KW-1017">Isopeptide bond</keyword>
<keyword id="KW-0539">Nucleus</keyword>
<keyword id="KW-0597">Phosphoprotein</keyword>
<keyword id="KW-1267">Proteomics identification</keyword>
<keyword id="KW-1185">Reference proteome</keyword>
<keyword id="KW-0832">Ubl conjugation</keyword>